<protein>
    <recommendedName>
        <fullName evidence="1">Large ribosomal subunit protein uL2</fullName>
    </recommendedName>
    <alternativeName>
        <fullName evidence="3">50S ribosomal protein L2</fullName>
    </alternativeName>
</protein>
<sequence length="277" mass="30345">MAVKGFRPTTPTRREMTMCTFEEITTSTPEKSLLVSLKKSGGRNANGKITVRHIGGGAKRKYRIIDFKRNKDNIPAKVVSIEYDPNRTAFIALVVYADGEKRYIIAPVGLKVGDTVVSGPESDIKVGNCLPIRNIPVGTVIHNIELAAGKGAQLVRSAGNSAQLMAKEGDYSQVRLPSGEVRYIRVECRATIGVVSNQTSEIVNIGKAGRKRHMGVRPTVRGSVMNPNDHPHGGGEGRSPIGHPSPRTPWGKPALGYKTRKNKKYSDRFIVKRRHDK</sequence>
<keyword id="KW-0687">Ribonucleoprotein</keyword>
<keyword id="KW-0689">Ribosomal protein</keyword>
<keyword id="KW-0694">RNA-binding</keyword>
<keyword id="KW-0699">rRNA-binding</keyword>
<accession>A7FZ66</accession>
<dbReference type="EMBL" id="CP000726">
    <property type="protein sequence ID" value="ABS35648.1"/>
    <property type="molecule type" value="Genomic_DNA"/>
</dbReference>
<dbReference type="RefSeq" id="WP_003357299.1">
    <property type="nucleotide sequence ID" value="NC_009697.1"/>
</dbReference>
<dbReference type="SMR" id="A7FZ66"/>
<dbReference type="GeneID" id="5187734"/>
<dbReference type="KEGG" id="cba:CLB_3534"/>
<dbReference type="HOGENOM" id="CLU_036235_2_1_9"/>
<dbReference type="GO" id="GO:0015934">
    <property type="term" value="C:large ribosomal subunit"/>
    <property type="evidence" value="ECO:0007669"/>
    <property type="project" value="InterPro"/>
</dbReference>
<dbReference type="GO" id="GO:0019843">
    <property type="term" value="F:rRNA binding"/>
    <property type="evidence" value="ECO:0007669"/>
    <property type="project" value="UniProtKB-UniRule"/>
</dbReference>
<dbReference type="GO" id="GO:0003735">
    <property type="term" value="F:structural constituent of ribosome"/>
    <property type="evidence" value="ECO:0007669"/>
    <property type="project" value="InterPro"/>
</dbReference>
<dbReference type="GO" id="GO:0016740">
    <property type="term" value="F:transferase activity"/>
    <property type="evidence" value="ECO:0007669"/>
    <property type="project" value="InterPro"/>
</dbReference>
<dbReference type="GO" id="GO:0002181">
    <property type="term" value="P:cytoplasmic translation"/>
    <property type="evidence" value="ECO:0007669"/>
    <property type="project" value="TreeGrafter"/>
</dbReference>
<dbReference type="FunFam" id="2.30.30.30:FF:000001">
    <property type="entry name" value="50S ribosomal protein L2"/>
    <property type="match status" value="1"/>
</dbReference>
<dbReference type="FunFam" id="2.40.50.140:FF:000003">
    <property type="entry name" value="50S ribosomal protein L2"/>
    <property type="match status" value="1"/>
</dbReference>
<dbReference type="FunFam" id="4.10.950.10:FF:000001">
    <property type="entry name" value="50S ribosomal protein L2"/>
    <property type="match status" value="1"/>
</dbReference>
<dbReference type="Gene3D" id="2.30.30.30">
    <property type="match status" value="1"/>
</dbReference>
<dbReference type="Gene3D" id="2.40.50.140">
    <property type="entry name" value="Nucleic acid-binding proteins"/>
    <property type="match status" value="1"/>
</dbReference>
<dbReference type="Gene3D" id="4.10.950.10">
    <property type="entry name" value="Ribosomal protein L2, domain 3"/>
    <property type="match status" value="1"/>
</dbReference>
<dbReference type="HAMAP" id="MF_01320_B">
    <property type="entry name" value="Ribosomal_uL2_B"/>
    <property type="match status" value="1"/>
</dbReference>
<dbReference type="InterPro" id="IPR012340">
    <property type="entry name" value="NA-bd_OB-fold"/>
</dbReference>
<dbReference type="InterPro" id="IPR014722">
    <property type="entry name" value="Rib_uL2_dom2"/>
</dbReference>
<dbReference type="InterPro" id="IPR002171">
    <property type="entry name" value="Ribosomal_uL2"/>
</dbReference>
<dbReference type="InterPro" id="IPR005880">
    <property type="entry name" value="Ribosomal_uL2_bac/org-type"/>
</dbReference>
<dbReference type="InterPro" id="IPR022669">
    <property type="entry name" value="Ribosomal_uL2_C"/>
</dbReference>
<dbReference type="InterPro" id="IPR022671">
    <property type="entry name" value="Ribosomal_uL2_CS"/>
</dbReference>
<dbReference type="InterPro" id="IPR014726">
    <property type="entry name" value="Ribosomal_uL2_dom3"/>
</dbReference>
<dbReference type="InterPro" id="IPR022666">
    <property type="entry name" value="Ribosomal_uL2_RNA-bd_dom"/>
</dbReference>
<dbReference type="InterPro" id="IPR008991">
    <property type="entry name" value="Translation_prot_SH3-like_sf"/>
</dbReference>
<dbReference type="NCBIfam" id="TIGR01171">
    <property type="entry name" value="rplB_bact"/>
    <property type="match status" value="1"/>
</dbReference>
<dbReference type="PANTHER" id="PTHR13691:SF5">
    <property type="entry name" value="LARGE RIBOSOMAL SUBUNIT PROTEIN UL2M"/>
    <property type="match status" value="1"/>
</dbReference>
<dbReference type="PANTHER" id="PTHR13691">
    <property type="entry name" value="RIBOSOMAL PROTEIN L2"/>
    <property type="match status" value="1"/>
</dbReference>
<dbReference type="Pfam" id="PF00181">
    <property type="entry name" value="Ribosomal_L2"/>
    <property type="match status" value="1"/>
</dbReference>
<dbReference type="Pfam" id="PF03947">
    <property type="entry name" value="Ribosomal_L2_C"/>
    <property type="match status" value="1"/>
</dbReference>
<dbReference type="PIRSF" id="PIRSF002158">
    <property type="entry name" value="Ribosomal_L2"/>
    <property type="match status" value="1"/>
</dbReference>
<dbReference type="SMART" id="SM01383">
    <property type="entry name" value="Ribosomal_L2"/>
    <property type="match status" value="1"/>
</dbReference>
<dbReference type="SMART" id="SM01382">
    <property type="entry name" value="Ribosomal_L2_C"/>
    <property type="match status" value="1"/>
</dbReference>
<dbReference type="SUPFAM" id="SSF50249">
    <property type="entry name" value="Nucleic acid-binding proteins"/>
    <property type="match status" value="1"/>
</dbReference>
<dbReference type="SUPFAM" id="SSF50104">
    <property type="entry name" value="Translation proteins SH3-like domain"/>
    <property type="match status" value="1"/>
</dbReference>
<dbReference type="PROSITE" id="PS00467">
    <property type="entry name" value="RIBOSOMAL_L2"/>
    <property type="match status" value="1"/>
</dbReference>
<organism>
    <name type="scientific">Clostridium botulinum (strain ATCC 19397 / Type A)</name>
    <dbReference type="NCBI Taxonomy" id="441770"/>
    <lineage>
        <taxon>Bacteria</taxon>
        <taxon>Bacillati</taxon>
        <taxon>Bacillota</taxon>
        <taxon>Clostridia</taxon>
        <taxon>Eubacteriales</taxon>
        <taxon>Clostridiaceae</taxon>
        <taxon>Clostridium</taxon>
    </lineage>
</organism>
<gene>
    <name evidence="1" type="primary">rplB</name>
    <name type="ordered locus">CLB_3534</name>
</gene>
<evidence type="ECO:0000255" key="1">
    <source>
        <dbReference type="HAMAP-Rule" id="MF_01320"/>
    </source>
</evidence>
<evidence type="ECO:0000256" key="2">
    <source>
        <dbReference type="SAM" id="MobiDB-lite"/>
    </source>
</evidence>
<evidence type="ECO:0000305" key="3"/>
<comment type="function">
    <text evidence="1">One of the primary rRNA binding proteins. Required for association of the 30S and 50S subunits to form the 70S ribosome, for tRNA binding and peptide bond formation. It has been suggested to have peptidyltransferase activity; this is somewhat controversial. Makes several contacts with the 16S rRNA in the 70S ribosome.</text>
</comment>
<comment type="subunit">
    <text evidence="1">Part of the 50S ribosomal subunit. Forms a bridge to the 30S subunit in the 70S ribosome.</text>
</comment>
<comment type="similarity">
    <text evidence="1">Belongs to the universal ribosomal protein uL2 family.</text>
</comment>
<proteinExistence type="inferred from homology"/>
<name>RL2_CLOB1</name>
<reference key="1">
    <citation type="journal article" date="2007" name="PLoS ONE">
        <title>Analysis of the neurotoxin complex genes in Clostridium botulinum A1-A4 and B1 strains: BoNT/A3, /Ba4 and /B1 clusters are located within plasmids.</title>
        <authorList>
            <person name="Smith T.J."/>
            <person name="Hill K.K."/>
            <person name="Foley B.T."/>
            <person name="Detter J.C."/>
            <person name="Munk A.C."/>
            <person name="Bruce D.C."/>
            <person name="Doggett N.A."/>
            <person name="Smith L.A."/>
            <person name="Marks J.D."/>
            <person name="Xie G."/>
            <person name="Brettin T.S."/>
        </authorList>
    </citation>
    <scope>NUCLEOTIDE SEQUENCE [LARGE SCALE GENOMIC DNA]</scope>
    <source>
        <strain>ATCC 19397 / Type A</strain>
    </source>
</reference>
<feature type="chain" id="PRO_0000309898" description="Large ribosomal subunit protein uL2">
    <location>
        <begin position="1"/>
        <end position="277"/>
    </location>
</feature>
<feature type="region of interest" description="Disordered" evidence="2">
    <location>
        <begin position="219"/>
        <end position="277"/>
    </location>
</feature>